<sequence length="191" mass="21829">MGKKLVMAQKRGETRALCLGVAMVMCAVITYYILGTTMLPLYQKSVWTQESLCRLIETNIRDQEELEGKKVPQYPCLWVNVSAVGKWAVLYHTEETRDRNQQCSYIPGSLDNYQMALADVEKVRAKFHERQVFYCFSTTQENETSVLYQRLYGPQALLASLFWPTFLLTGGLLIIAMVKINRSLSILAAQK</sequence>
<accession>O46372</accession>
<accession>Q5MGS8</accession>
<gene>
    <name type="primary">KCNMB1</name>
</gene>
<proteinExistence type="evidence at transcript level"/>
<name>KCMB1_RABIT</name>
<keyword id="KW-0325">Glycoprotein</keyword>
<keyword id="KW-0407">Ion channel</keyword>
<keyword id="KW-0406">Ion transport</keyword>
<keyword id="KW-0472">Membrane</keyword>
<keyword id="KW-1185">Reference proteome</keyword>
<keyword id="KW-0812">Transmembrane</keyword>
<keyword id="KW-1133">Transmembrane helix</keyword>
<keyword id="KW-0813">Transport</keyword>
<protein>
    <recommendedName>
        <fullName>Calcium-activated potassium channel subunit beta-1</fullName>
    </recommendedName>
    <alternativeName>
        <fullName>BK channel subunit beta-1</fullName>
        <shortName>BKbeta</shortName>
        <shortName>BKbeta1</shortName>
    </alternativeName>
    <alternativeName>
        <fullName>Calcium-activated potassium channel, subfamily M subunit beta-1</fullName>
        <shortName>Calcium-activated potassium channel subunit beta</shortName>
    </alternativeName>
    <alternativeName>
        <fullName>Charybdotoxin receptor subunit beta-1</fullName>
    </alternativeName>
    <alternativeName>
        <fullName>K(VCA)beta-1</fullName>
    </alternativeName>
    <alternativeName>
        <fullName>Maxi K channel subunit beta-1</fullName>
    </alternativeName>
    <alternativeName>
        <fullName>Slo-beta-1</fullName>
        <shortName>Slo-beta</shortName>
    </alternativeName>
</protein>
<reference key="1">
    <citation type="journal article" date="2000" name="Biochemistry">
        <title>Interaction of charybdotoxin S10A with single maxi-K channels: kinetics of blockade depend on the presence of the beta 1 subunit.</title>
        <authorList>
            <person name="Giangiacomo K.M."/>
            <person name="Fremont V."/>
            <person name="Mullmann T.J."/>
            <person name="Hanner M."/>
            <person name="Cox R.H."/>
            <person name="Garcia M.L."/>
        </authorList>
    </citation>
    <scope>NUCLEOTIDE SEQUENCE [MRNA]</scope>
    <source>
        <strain>New Zealand white</strain>
        <tissue>Brain</tissue>
    </source>
</reference>
<reference key="2">
    <citation type="journal article" date="2001" name="Pflugers Arch.">
        <title>Comparative study of the molecular and functional expression of L-type Ca2+ channels and large-conductance, Ca2+-activated K+ channels in rabbit aorta and vas deferens smooth muscle.</title>
        <authorList>
            <person name="Ohya S."/>
            <person name="Yamamura H."/>
            <person name="Muraki K."/>
            <person name="Watanabe M."/>
            <person name="Imaizumi Y."/>
        </authorList>
    </citation>
    <scope>NUCLEOTIDE SEQUENCE [MRNA]</scope>
</reference>
<reference key="3">
    <citation type="submission" date="1997-11" db="EMBL/GenBank/DDBJ databases">
        <authorList>
            <person name="Sakamoto H."/>
            <person name="Ide T."/>
            <person name="Kasai M."/>
        </authorList>
    </citation>
    <scope>NUCLEOTIDE SEQUENCE [MRNA]</scope>
    <source>
        <tissue>Skeletal muscle</tissue>
    </source>
</reference>
<reference key="4">
    <citation type="journal article" date="2005" name="Am. J. Physiol.">
        <title>BK-beta1 subunit: immunolocalization in the mammalian connecting tubule and its role in the kaliuretic response to volume expansion.</title>
        <authorList>
            <person name="Pluznick J.L."/>
            <person name="Wei P."/>
            <person name="Grimm P.R."/>
            <person name="Sansom S.C."/>
        </authorList>
    </citation>
    <scope>NUCLEOTIDE SEQUENCE [MRNA]</scope>
</reference>
<reference key="5">
    <citation type="submission" date="2006-06" db="EMBL/GenBank/DDBJ databases">
        <title>Cloning and characterization of large conductance Ca2+-activated K+ channel beta1 subunit in rabbit sphincter of Oddi.</title>
        <authorList>
            <person name="Zhang X."/>
            <person name="Wang S."/>
            <person name="Wang Y."/>
            <person name="Du P."/>
            <person name="Wei J."/>
        </authorList>
    </citation>
    <scope>NUCLEOTIDE SEQUENCE [MRNA]</scope>
    <source>
        <tissue>Sphincter of Oddi</tissue>
    </source>
</reference>
<reference key="6">
    <citation type="submission" date="2006-07" db="EMBL/GenBank/DDBJ databases">
        <title>Cloning and characterization of rabbit large conductance calcium activated potassium channel beta1 subunit gene and its promoter region.</title>
        <authorList>
            <person name="Zhang X."/>
            <person name="Wang S."/>
            <person name="Yan Z."/>
            <person name="Zhang Y."/>
            <person name="Wei J."/>
        </authorList>
    </citation>
    <scope>NUCLEOTIDE SEQUENCE [GENOMIC DNA]</scope>
</reference>
<feature type="chain" id="PRO_0000187048" description="Calcium-activated potassium channel subunit beta-1">
    <location>
        <begin position="1"/>
        <end position="191"/>
    </location>
</feature>
<feature type="topological domain" description="Cytoplasmic" evidence="2">
    <location>
        <begin position="1"/>
        <end position="15"/>
    </location>
</feature>
<feature type="transmembrane region" description="Helical; Name=1" evidence="2">
    <location>
        <begin position="16"/>
        <end position="36"/>
    </location>
</feature>
<feature type="topological domain" description="Extracellular" evidence="2">
    <location>
        <begin position="37"/>
        <end position="157"/>
    </location>
</feature>
<feature type="transmembrane region" description="Helical; Name=2" evidence="2">
    <location>
        <begin position="158"/>
        <end position="178"/>
    </location>
</feature>
<feature type="topological domain" description="Cytoplasmic" evidence="2">
    <location>
        <begin position="179"/>
        <end position="191"/>
    </location>
</feature>
<feature type="glycosylation site" description="N-linked (GlcNAc...) asparagine" evidence="2">
    <location>
        <position position="80"/>
    </location>
</feature>
<feature type="glycosylation site" description="N-linked (GlcNAc...) asparagine" evidence="2">
    <location>
        <position position="142"/>
    </location>
</feature>
<evidence type="ECO:0000250" key="1"/>
<evidence type="ECO:0000255" key="2"/>
<evidence type="ECO:0000305" key="3"/>
<organism>
    <name type="scientific">Oryctolagus cuniculus</name>
    <name type="common">Rabbit</name>
    <dbReference type="NCBI Taxonomy" id="9986"/>
    <lineage>
        <taxon>Eukaryota</taxon>
        <taxon>Metazoa</taxon>
        <taxon>Chordata</taxon>
        <taxon>Craniata</taxon>
        <taxon>Vertebrata</taxon>
        <taxon>Euteleostomi</taxon>
        <taxon>Mammalia</taxon>
        <taxon>Eutheria</taxon>
        <taxon>Euarchontoglires</taxon>
        <taxon>Glires</taxon>
        <taxon>Lagomorpha</taxon>
        <taxon>Leporidae</taxon>
        <taxon>Oryctolagus</taxon>
    </lineage>
</organism>
<dbReference type="EMBL" id="AF107300">
    <property type="protein sequence ID" value="AAD17994.1"/>
    <property type="molecule type" value="mRNA"/>
</dbReference>
<dbReference type="EMBL" id="AB001934">
    <property type="protein sequence ID" value="BAA25630.1"/>
    <property type="molecule type" value="mRNA"/>
</dbReference>
<dbReference type="EMBL" id="AB009313">
    <property type="protein sequence ID" value="BAA23748.1"/>
    <property type="molecule type" value="mRNA"/>
</dbReference>
<dbReference type="EMBL" id="AY829265">
    <property type="protein sequence ID" value="AAV88620.1"/>
    <property type="molecule type" value="mRNA"/>
</dbReference>
<dbReference type="EMBL" id="DQ821756">
    <property type="protein sequence ID" value="ABG49461.1"/>
    <property type="molecule type" value="mRNA"/>
</dbReference>
<dbReference type="EMBL" id="DQ839485">
    <property type="protein sequence ID" value="ABG74946.1"/>
    <property type="molecule type" value="Genomic_DNA"/>
</dbReference>
<dbReference type="RefSeq" id="NP_001075694.1">
    <property type="nucleotide sequence ID" value="NM_001082225.1"/>
</dbReference>
<dbReference type="RefSeq" id="XP_051699218.1">
    <property type="nucleotide sequence ID" value="XM_051843258.2"/>
</dbReference>
<dbReference type="SMR" id="O46372"/>
<dbReference type="FunCoup" id="O46372">
    <property type="interactions" value="54"/>
</dbReference>
<dbReference type="STRING" id="9986.ENSOCUP00000000466"/>
<dbReference type="GlyCosmos" id="O46372">
    <property type="glycosylation" value="2 sites, No reported glycans"/>
</dbReference>
<dbReference type="PaxDb" id="9986-ENSOCUP00000000466"/>
<dbReference type="Ensembl" id="ENSOCUT00000000539.4">
    <property type="protein sequence ID" value="ENSOCUP00000000466.2"/>
    <property type="gene ID" value="ENSOCUG00000000539.4"/>
</dbReference>
<dbReference type="GeneID" id="100009034"/>
<dbReference type="KEGG" id="ocu:100009034"/>
<dbReference type="CTD" id="3779"/>
<dbReference type="eggNOG" id="ENOG502RZA0">
    <property type="taxonomic scope" value="Eukaryota"/>
</dbReference>
<dbReference type="GeneTree" id="ENSGT00950000183039"/>
<dbReference type="HOGENOM" id="CLU_085739_1_1_1"/>
<dbReference type="InParanoid" id="O46372"/>
<dbReference type="OMA" id="PYPCLQV"/>
<dbReference type="OrthoDB" id="5962477at2759"/>
<dbReference type="TreeFam" id="TF328589"/>
<dbReference type="Proteomes" id="UP000001811">
    <property type="component" value="Chromosome 3"/>
</dbReference>
<dbReference type="Bgee" id="ENSOCUG00000000539">
    <property type="expression patterns" value="Expressed in aorta and 15 other cell types or tissues"/>
</dbReference>
<dbReference type="GO" id="GO:0008076">
    <property type="term" value="C:voltage-gated potassium channel complex"/>
    <property type="evidence" value="ECO:0007669"/>
    <property type="project" value="TreeGrafter"/>
</dbReference>
<dbReference type="GO" id="GO:0015269">
    <property type="term" value="F:calcium-activated potassium channel activity"/>
    <property type="evidence" value="ECO:0007669"/>
    <property type="project" value="InterPro"/>
</dbReference>
<dbReference type="GO" id="GO:0015459">
    <property type="term" value="F:potassium channel regulator activity"/>
    <property type="evidence" value="ECO:0007669"/>
    <property type="project" value="TreeGrafter"/>
</dbReference>
<dbReference type="GO" id="GO:0005513">
    <property type="term" value="P:detection of calcium ion"/>
    <property type="evidence" value="ECO:0007669"/>
    <property type="project" value="TreeGrafter"/>
</dbReference>
<dbReference type="InterPro" id="IPR003930">
    <property type="entry name" value="K_chnl_Ca-activ_BK_bsu"/>
</dbReference>
<dbReference type="PANTHER" id="PTHR10258">
    <property type="entry name" value="CALCIUM-ACTIVATED POTASSIUM CHANNEL SUBUNIT BETA"/>
    <property type="match status" value="1"/>
</dbReference>
<dbReference type="PANTHER" id="PTHR10258:SF1">
    <property type="entry name" value="CALCIUM-ACTIVATED POTASSIUM CHANNEL SUBUNIT BETA-1"/>
    <property type="match status" value="1"/>
</dbReference>
<dbReference type="Pfam" id="PF03185">
    <property type="entry name" value="CaKB"/>
    <property type="match status" value="1"/>
</dbReference>
<dbReference type="PRINTS" id="PR01450">
    <property type="entry name" value="BKCHANNELB"/>
</dbReference>
<comment type="function">
    <text evidence="1">Regulatory subunit of the calcium activated potassium KCNMA1 (maxiK) channel. Modulates the calcium sensitivity and gating kinetics of KCNMA1, thereby contributing to KCNMA1 channel diversity. Increases the apparent Ca(2+)/voltage sensitivity of the KCNMA1 channel. It also modifies KCNMA1 channel kinetics and alters its pharmacological properties. It slows down the activation and the deactivation kinetics of the channel. Acts as a negative regulator of smooth muscle contraction by enhancing the calcium sensitivity to KCNMA1. Its presence is also a requirement for internal binding of the KCNMA1 channel opener dehydrosoyasaponin I (DHS-1) triterpene glycoside and for external binding of the agonist hormone 17-beta-estradiol (E2). Increases the binding activity of charybdotoxin (CTX) toxin to KCNMA1 peptide blocker by increasing the CTX association rate and decreasing the dissociation rate (By similarity).</text>
</comment>
<comment type="subunit">
    <text evidence="1">Interacts with KCNMA1 tetramer. There are probably 4 molecules of KCMNB1 per KCNMA1 tetramer (By similarity).</text>
</comment>
<comment type="subcellular location">
    <subcellularLocation>
        <location>Membrane</location>
        <topology>Multi-pass membrane protein</topology>
    </subcellularLocation>
</comment>
<comment type="PTM">
    <text evidence="1">N-glycosylated.</text>
</comment>
<comment type="similarity">
    <text evidence="3">Belongs to the KCNMB (TC 8.A.14.1) family. KCNMB1 subfamily.</text>
</comment>